<dbReference type="EC" id="1.17.7.4" evidence="1"/>
<dbReference type="EMBL" id="AE017285">
    <property type="protein sequence ID" value="AAS94539.1"/>
    <property type="molecule type" value="Genomic_DNA"/>
</dbReference>
<dbReference type="RefSeq" id="WP_010937366.1">
    <property type="nucleotide sequence ID" value="NC_002937.3"/>
</dbReference>
<dbReference type="RefSeq" id="YP_009280.1">
    <property type="nucleotide sequence ID" value="NC_002937.3"/>
</dbReference>
<dbReference type="SMR" id="Q72G08"/>
<dbReference type="IntAct" id="Q72G08">
    <property type="interactions" value="2"/>
</dbReference>
<dbReference type="STRING" id="882.DVU_0055"/>
<dbReference type="PaxDb" id="882-DVU_0055"/>
<dbReference type="EnsemblBacteria" id="AAS94539">
    <property type="protein sequence ID" value="AAS94539"/>
    <property type="gene ID" value="DVU_0055"/>
</dbReference>
<dbReference type="KEGG" id="dvu:DVU_0055"/>
<dbReference type="PATRIC" id="fig|882.5.peg.55"/>
<dbReference type="eggNOG" id="COG0761">
    <property type="taxonomic scope" value="Bacteria"/>
</dbReference>
<dbReference type="HOGENOM" id="CLU_027486_0_1_7"/>
<dbReference type="OrthoDB" id="9804068at2"/>
<dbReference type="PhylomeDB" id="Q72G08"/>
<dbReference type="UniPathway" id="UPA00056">
    <property type="reaction ID" value="UER00097"/>
</dbReference>
<dbReference type="UniPathway" id="UPA00059">
    <property type="reaction ID" value="UER00105"/>
</dbReference>
<dbReference type="Proteomes" id="UP000002194">
    <property type="component" value="Chromosome"/>
</dbReference>
<dbReference type="GO" id="GO:0051539">
    <property type="term" value="F:4 iron, 4 sulfur cluster binding"/>
    <property type="evidence" value="ECO:0007669"/>
    <property type="project" value="UniProtKB-UniRule"/>
</dbReference>
<dbReference type="GO" id="GO:0051745">
    <property type="term" value="F:4-hydroxy-3-methylbut-2-enyl diphosphate reductase activity"/>
    <property type="evidence" value="ECO:0007669"/>
    <property type="project" value="UniProtKB-UniRule"/>
</dbReference>
<dbReference type="GO" id="GO:0046872">
    <property type="term" value="F:metal ion binding"/>
    <property type="evidence" value="ECO:0007669"/>
    <property type="project" value="UniProtKB-KW"/>
</dbReference>
<dbReference type="GO" id="GO:0050992">
    <property type="term" value="P:dimethylallyl diphosphate biosynthetic process"/>
    <property type="evidence" value="ECO:0007669"/>
    <property type="project" value="UniProtKB-UniRule"/>
</dbReference>
<dbReference type="GO" id="GO:0019288">
    <property type="term" value="P:isopentenyl diphosphate biosynthetic process, methylerythritol 4-phosphate pathway"/>
    <property type="evidence" value="ECO:0007669"/>
    <property type="project" value="UniProtKB-UniRule"/>
</dbReference>
<dbReference type="GO" id="GO:0016114">
    <property type="term" value="P:terpenoid biosynthetic process"/>
    <property type="evidence" value="ECO:0007669"/>
    <property type="project" value="UniProtKB-UniRule"/>
</dbReference>
<dbReference type="CDD" id="cd13944">
    <property type="entry name" value="lytB_ispH"/>
    <property type="match status" value="1"/>
</dbReference>
<dbReference type="Gene3D" id="3.40.50.11270">
    <property type="match status" value="1"/>
</dbReference>
<dbReference type="Gene3D" id="3.40.1010.20">
    <property type="entry name" value="4-hydroxy-3-methylbut-2-enyl diphosphate reductase, catalytic domain"/>
    <property type="match status" value="2"/>
</dbReference>
<dbReference type="HAMAP" id="MF_00191">
    <property type="entry name" value="IspH"/>
    <property type="match status" value="1"/>
</dbReference>
<dbReference type="InterPro" id="IPR003451">
    <property type="entry name" value="LytB/IspH"/>
</dbReference>
<dbReference type="NCBIfam" id="TIGR00216">
    <property type="entry name" value="ispH_lytB"/>
    <property type="match status" value="1"/>
</dbReference>
<dbReference type="PANTHER" id="PTHR30426">
    <property type="entry name" value="4-HYDROXY-3-METHYLBUT-2-ENYL DIPHOSPHATE REDUCTASE"/>
    <property type="match status" value="1"/>
</dbReference>
<dbReference type="PANTHER" id="PTHR30426:SF0">
    <property type="entry name" value="4-HYDROXY-3-METHYLBUT-2-ENYL DIPHOSPHATE REDUCTASE"/>
    <property type="match status" value="1"/>
</dbReference>
<dbReference type="Pfam" id="PF02401">
    <property type="entry name" value="LYTB"/>
    <property type="match status" value="1"/>
</dbReference>
<protein>
    <recommendedName>
        <fullName evidence="1">4-hydroxy-3-methylbut-2-enyl diphosphate reductase</fullName>
        <shortName evidence="1">HMBPP reductase</shortName>
        <ecNumber evidence="1">1.17.7.4</ecNumber>
    </recommendedName>
</protein>
<organism>
    <name type="scientific">Nitratidesulfovibrio vulgaris (strain ATCC 29579 / DSM 644 / CCUG 34227 / NCIMB 8303 / VKM B-1760 / Hildenborough)</name>
    <name type="common">Desulfovibrio vulgaris</name>
    <dbReference type="NCBI Taxonomy" id="882"/>
    <lineage>
        <taxon>Bacteria</taxon>
        <taxon>Pseudomonadati</taxon>
        <taxon>Thermodesulfobacteriota</taxon>
        <taxon>Desulfovibrionia</taxon>
        <taxon>Desulfovibrionales</taxon>
        <taxon>Desulfovibrionaceae</taxon>
        <taxon>Nitratidesulfovibrio</taxon>
    </lineage>
</organism>
<keyword id="KW-0004">4Fe-4S</keyword>
<keyword id="KW-0408">Iron</keyword>
<keyword id="KW-0411">Iron-sulfur</keyword>
<keyword id="KW-0414">Isoprene biosynthesis</keyword>
<keyword id="KW-0479">Metal-binding</keyword>
<keyword id="KW-0560">Oxidoreductase</keyword>
<keyword id="KW-1185">Reference proteome</keyword>
<accession>Q72G08</accession>
<evidence type="ECO:0000255" key="1">
    <source>
        <dbReference type="HAMAP-Rule" id="MF_00191"/>
    </source>
</evidence>
<sequence length="290" mass="31527">MNVIRARTAGFCMGVSLALRKLDREVDRAEEKAAQGSPRCRIATFGPIIHNPQVLEAYAGMGVRCLRQVDEVEAGDHVVIRAHGVPQQQEKALRSRDAVVVDATCPKVKKAQLGIEEQCRAGRTLLLFGEAEHPEVRGLLSYAGEGALVFGSVDELEGLPLQPETEYFLAAQTTQDRVAFEVARAWLHERLGHEVPVLETICDATRLRQQEAIDIARKVDAMVVVGGFDSGNTRRLADVAAAQGVFTVHVENESQLPVEQLRGCGIIGLTAGASTPKSIIDATQRFLESL</sequence>
<comment type="function">
    <text evidence="1">Catalyzes the conversion of 1-hydroxy-2-methyl-2-(E)-butenyl 4-diphosphate (HMBPP) into a mixture of isopentenyl diphosphate (IPP) and dimethylallyl diphosphate (DMAPP). Acts in the terminal step of the DOXP/MEP pathway for isoprenoid precursor biosynthesis.</text>
</comment>
<comment type="catalytic activity">
    <reaction evidence="1">
        <text>isopentenyl diphosphate + 2 oxidized [2Fe-2S]-[ferredoxin] + H2O = (2E)-4-hydroxy-3-methylbut-2-enyl diphosphate + 2 reduced [2Fe-2S]-[ferredoxin] + 2 H(+)</text>
        <dbReference type="Rhea" id="RHEA:24488"/>
        <dbReference type="Rhea" id="RHEA-COMP:10000"/>
        <dbReference type="Rhea" id="RHEA-COMP:10001"/>
        <dbReference type="ChEBI" id="CHEBI:15377"/>
        <dbReference type="ChEBI" id="CHEBI:15378"/>
        <dbReference type="ChEBI" id="CHEBI:33737"/>
        <dbReference type="ChEBI" id="CHEBI:33738"/>
        <dbReference type="ChEBI" id="CHEBI:128753"/>
        <dbReference type="ChEBI" id="CHEBI:128769"/>
        <dbReference type="EC" id="1.17.7.4"/>
    </reaction>
</comment>
<comment type="catalytic activity">
    <reaction evidence="1">
        <text>dimethylallyl diphosphate + 2 oxidized [2Fe-2S]-[ferredoxin] + H2O = (2E)-4-hydroxy-3-methylbut-2-enyl diphosphate + 2 reduced [2Fe-2S]-[ferredoxin] + 2 H(+)</text>
        <dbReference type="Rhea" id="RHEA:24825"/>
        <dbReference type="Rhea" id="RHEA-COMP:10000"/>
        <dbReference type="Rhea" id="RHEA-COMP:10001"/>
        <dbReference type="ChEBI" id="CHEBI:15377"/>
        <dbReference type="ChEBI" id="CHEBI:15378"/>
        <dbReference type="ChEBI" id="CHEBI:33737"/>
        <dbReference type="ChEBI" id="CHEBI:33738"/>
        <dbReference type="ChEBI" id="CHEBI:57623"/>
        <dbReference type="ChEBI" id="CHEBI:128753"/>
        <dbReference type="EC" id="1.17.7.4"/>
    </reaction>
</comment>
<comment type="cofactor">
    <cofactor evidence="1">
        <name>[4Fe-4S] cluster</name>
        <dbReference type="ChEBI" id="CHEBI:49883"/>
    </cofactor>
    <text evidence="1">Binds 1 [4Fe-4S] cluster per subunit.</text>
</comment>
<comment type="pathway">
    <text evidence="1">Isoprenoid biosynthesis; dimethylallyl diphosphate biosynthesis; dimethylallyl diphosphate from (2E)-4-hydroxy-3-methylbutenyl diphosphate: step 1/1.</text>
</comment>
<comment type="pathway">
    <text evidence="1">Isoprenoid biosynthesis; isopentenyl diphosphate biosynthesis via DXP pathway; isopentenyl diphosphate from 1-deoxy-D-xylulose 5-phosphate: step 6/6.</text>
</comment>
<comment type="interaction">
    <interactant intactId="EBI-10072158">
        <id>Q72G08</id>
    </interactant>
    <interactant intactId="EBI-10067158">
        <id>Q72EB4</id>
        <label>DVU_0664</label>
    </interactant>
    <organismsDiffer>false</organismsDiffer>
    <experiments>2</experiments>
</comment>
<comment type="similarity">
    <text evidence="1">Belongs to the IspH family.</text>
</comment>
<gene>
    <name evidence="1" type="primary">ispH</name>
    <name type="ordered locus">DVU_0055</name>
</gene>
<feature type="chain" id="PRO_0000128811" description="4-hydroxy-3-methylbut-2-enyl diphosphate reductase">
    <location>
        <begin position="1"/>
        <end position="290"/>
    </location>
</feature>
<feature type="active site" description="Proton donor" evidence="1">
    <location>
        <position position="135"/>
    </location>
</feature>
<feature type="binding site" evidence="1">
    <location>
        <position position="12"/>
    </location>
    <ligand>
        <name>[4Fe-4S] cluster</name>
        <dbReference type="ChEBI" id="CHEBI:49883"/>
    </ligand>
</feature>
<feature type="binding site" evidence="1">
    <location>
        <position position="50"/>
    </location>
    <ligand>
        <name>(2E)-4-hydroxy-3-methylbut-2-enyl diphosphate</name>
        <dbReference type="ChEBI" id="CHEBI:128753"/>
    </ligand>
</feature>
<feature type="binding site" evidence="1">
    <location>
        <position position="50"/>
    </location>
    <ligand>
        <name>dimethylallyl diphosphate</name>
        <dbReference type="ChEBI" id="CHEBI:57623"/>
    </ligand>
</feature>
<feature type="binding site" evidence="1">
    <location>
        <position position="50"/>
    </location>
    <ligand>
        <name>isopentenyl diphosphate</name>
        <dbReference type="ChEBI" id="CHEBI:128769"/>
    </ligand>
</feature>
<feature type="binding site" evidence="1">
    <location>
        <position position="83"/>
    </location>
    <ligand>
        <name>(2E)-4-hydroxy-3-methylbut-2-enyl diphosphate</name>
        <dbReference type="ChEBI" id="CHEBI:128753"/>
    </ligand>
</feature>
<feature type="binding site" evidence="1">
    <location>
        <position position="83"/>
    </location>
    <ligand>
        <name>dimethylallyl diphosphate</name>
        <dbReference type="ChEBI" id="CHEBI:57623"/>
    </ligand>
</feature>
<feature type="binding site" evidence="1">
    <location>
        <position position="83"/>
    </location>
    <ligand>
        <name>isopentenyl diphosphate</name>
        <dbReference type="ChEBI" id="CHEBI:128769"/>
    </ligand>
</feature>
<feature type="binding site" evidence="1">
    <location>
        <position position="105"/>
    </location>
    <ligand>
        <name>[4Fe-4S] cluster</name>
        <dbReference type="ChEBI" id="CHEBI:49883"/>
    </ligand>
</feature>
<feature type="binding site" evidence="1">
    <location>
        <position position="133"/>
    </location>
    <ligand>
        <name>(2E)-4-hydroxy-3-methylbut-2-enyl diphosphate</name>
        <dbReference type="ChEBI" id="CHEBI:128753"/>
    </ligand>
</feature>
<feature type="binding site" evidence="1">
    <location>
        <position position="133"/>
    </location>
    <ligand>
        <name>dimethylallyl diphosphate</name>
        <dbReference type="ChEBI" id="CHEBI:57623"/>
    </ligand>
</feature>
<feature type="binding site" evidence="1">
    <location>
        <position position="133"/>
    </location>
    <ligand>
        <name>isopentenyl diphosphate</name>
        <dbReference type="ChEBI" id="CHEBI:128769"/>
    </ligand>
</feature>
<feature type="binding site" evidence="1">
    <location>
        <position position="173"/>
    </location>
    <ligand>
        <name>(2E)-4-hydroxy-3-methylbut-2-enyl diphosphate</name>
        <dbReference type="ChEBI" id="CHEBI:128753"/>
    </ligand>
</feature>
<feature type="binding site" evidence="1">
    <location>
        <position position="202"/>
    </location>
    <ligand>
        <name>[4Fe-4S] cluster</name>
        <dbReference type="ChEBI" id="CHEBI:49883"/>
    </ligand>
</feature>
<feature type="binding site" evidence="1">
    <location>
        <position position="230"/>
    </location>
    <ligand>
        <name>(2E)-4-hydroxy-3-methylbut-2-enyl diphosphate</name>
        <dbReference type="ChEBI" id="CHEBI:128753"/>
    </ligand>
</feature>
<feature type="binding site" evidence="1">
    <location>
        <position position="230"/>
    </location>
    <ligand>
        <name>dimethylallyl diphosphate</name>
        <dbReference type="ChEBI" id="CHEBI:57623"/>
    </ligand>
</feature>
<feature type="binding site" evidence="1">
    <location>
        <position position="230"/>
    </location>
    <ligand>
        <name>isopentenyl diphosphate</name>
        <dbReference type="ChEBI" id="CHEBI:128769"/>
    </ligand>
</feature>
<feature type="binding site" evidence="1">
    <location>
        <position position="232"/>
    </location>
    <ligand>
        <name>(2E)-4-hydroxy-3-methylbut-2-enyl diphosphate</name>
        <dbReference type="ChEBI" id="CHEBI:128753"/>
    </ligand>
</feature>
<feature type="binding site" evidence="1">
    <location>
        <position position="232"/>
    </location>
    <ligand>
        <name>dimethylallyl diphosphate</name>
        <dbReference type="ChEBI" id="CHEBI:57623"/>
    </ligand>
</feature>
<feature type="binding site" evidence="1">
    <location>
        <position position="232"/>
    </location>
    <ligand>
        <name>isopentenyl diphosphate</name>
        <dbReference type="ChEBI" id="CHEBI:128769"/>
    </ligand>
</feature>
<feature type="binding site" evidence="1">
    <location>
        <position position="274"/>
    </location>
    <ligand>
        <name>(2E)-4-hydroxy-3-methylbut-2-enyl diphosphate</name>
        <dbReference type="ChEBI" id="CHEBI:128753"/>
    </ligand>
</feature>
<feature type="binding site" evidence="1">
    <location>
        <position position="274"/>
    </location>
    <ligand>
        <name>dimethylallyl diphosphate</name>
        <dbReference type="ChEBI" id="CHEBI:57623"/>
    </ligand>
</feature>
<feature type="binding site" evidence="1">
    <location>
        <position position="274"/>
    </location>
    <ligand>
        <name>isopentenyl diphosphate</name>
        <dbReference type="ChEBI" id="CHEBI:128769"/>
    </ligand>
</feature>
<proteinExistence type="evidence at protein level"/>
<reference key="1">
    <citation type="journal article" date="2004" name="Nat. Biotechnol.">
        <title>The genome sequence of the anaerobic, sulfate-reducing bacterium Desulfovibrio vulgaris Hildenborough.</title>
        <authorList>
            <person name="Heidelberg J.F."/>
            <person name="Seshadri R."/>
            <person name="Haveman S.A."/>
            <person name="Hemme C.L."/>
            <person name="Paulsen I.T."/>
            <person name="Kolonay J.F."/>
            <person name="Eisen J.A."/>
            <person name="Ward N.L."/>
            <person name="Methe B.A."/>
            <person name="Brinkac L.M."/>
            <person name="Daugherty S.C."/>
            <person name="DeBoy R.T."/>
            <person name="Dodson R.J."/>
            <person name="Durkin A.S."/>
            <person name="Madupu R."/>
            <person name="Nelson W.C."/>
            <person name="Sullivan S.A."/>
            <person name="Fouts D.E."/>
            <person name="Haft D.H."/>
            <person name="Selengut J."/>
            <person name="Peterson J.D."/>
            <person name="Davidsen T.M."/>
            <person name="Zafar N."/>
            <person name="Zhou L."/>
            <person name="Radune D."/>
            <person name="Dimitrov G."/>
            <person name="Hance M."/>
            <person name="Tran K."/>
            <person name="Khouri H.M."/>
            <person name="Gill J."/>
            <person name="Utterback T.R."/>
            <person name="Feldblyum T.V."/>
            <person name="Wall J.D."/>
            <person name="Voordouw G."/>
            <person name="Fraser C.M."/>
        </authorList>
    </citation>
    <scope>NUCLEOTIDE SEQUENCE [LARGE SCALE GENOMIC DNA]</scope>
    <source>
        <strain>ATCC 29579 / DSM 644 / CCUG 34227 / NCIMB 8303 / VKM B-1760 / Hildenborough</strain>
    </source>
</reference>
<name>ISPH_NITV2</name>